<sequence>MRTPNYINNNYFNNNNNNNNNNNNNNNNNNNNNNNNNNNNNNNQTNLNEENNDQYDMMRENLKIRNITVILKLLITMKAGITRNSSDTTGMTMTPSDQVPTPGVSKDDFNTLIIRHFRLYNNYPSPSPTTSFNSTNPQNTHQTRKSN</sequence>
<organism>
    <name type="scientific">Dictyostelium discoideum</name>
    <name type="common">Social amoeba</name>
    <dbReference type="NCBI Taxonomy" id="44689"/>
    <lineage>
        <taxon>Eukaryota</taxon>
        <taxon>Amoebozoa</taxon>
        <taxon>Evosea</taxon>
        <taxon>Eumycetozoa</taxon>
        <taxon>Dictyostelia</taxon>
        <taxon>Dictyosteliales</taxon>
        <taxon>Dictyosteliaceae</taxon>
        <taxon>Dictyostelium</taxon>
    </lineage>
</organism>
<accession>Q54QZ7</accession>
<protein>
    <recommendedName>
        <fullName>Putative uncharacterized protein DDB_G0283469</fullName>
    </recommendedName>
</protein>
<evidence type="ECO:0000256" key="1">
    <source>
        <dbReference type="SAM" id="MobiDB-lite"/>
    </source>
</evidence>
<gene>
    <name type="ORF">DDB_G0283469</name>
</gene>
<dbReference type="EMBL" id="AAFI02000055">
    <property type="protein sequence ID" value="EAL65719.1"/>
    <property type="molecule type" value="Genomic_DNA"/>
</dbReference>
<dbReference type="RefSeq" id="XP_639094.1">
    <property type="nucleotide sequence ID" value="XM_634002.1"/>
</dbReference>
<dbReference type="GlyGen" id="Q54QZ7">
    <property type="glycosylation" value="2 sites"/>
</dbReference>
<dbReference type="PaxDb" id="44689-DDB0185539"/>
<dbReference type="EnsemblProtists" id="EAL65719">
    <property type="protein sequence ID" value="EAL65719"/>
    <property type="gene ID" value="DDB_G0283469"/>
</dbReference>
<dbReference type="GeneID" id="8624118"/>
<dbReference type="KEGG" id="ddi:DDB_G0283469"/>
<dbReference type="dictyBase" id="DDB_G0283469"/>
<dbReference type="VEuPathDB" id="AmoebaDB:DDB_G0283469"/>
<dbReference type="HOGENOM" id="CLU_1771532_0_0_1"/>
<dbReference type="InParanoid" id="Q54QZ7"/>
<dbReference type="PRO" id="PR:Q54QZ7"/>
<dbReference type="Proteomes" id="UP000002195">
    <property type="component" value="Chromosome 4"/>
</dbReference>
<reference key="1">
    <citation type="journal article" date="2005" name="Nature">
        <title>The genome of the social amoeba Dictyostelium discoideum.</title>
        <authorList>
            <person name="Eichinger L."/>
            <person name="Pachebat J.A."/>
            <person name="Gloeckner G."/>
            <person name="Rajandream M.A."/>
            <person name="Sucgang R."/>
            <person name="Berriman M."/>
            <person name="Song J."/>
            <person name="Olsen R."/>
            <person name="Szafranski K."/>
            <person name="Xu Q."/>
            <person name="Tunggal B."/>
            <person name="Kummerfeld S."/>
            <person name="Madera M."/>
            <person name="Konfortov B.A."/>
            <person name="Rivero F."/>
            <person name="Bankier A.T."/>
            <person name="Lehmann R."/>
            <person name="Hamlin N."/>
            <person name="Davies R."/>
            <person name="Gaudet P."/>
            <person name="Fey P."/>
            <person name="Pilcher K."/>
            <person name="Chen G."/>
            <person name="Saunders D."/>
            <person name="Sodergren E.J."/>
            <person name="Davis P."/>
            <person name="Kerhornou A."/>
            <person name="Nie X."/>
            <person name="Hall N."/>
            <person name="Anjard C."/>
            <person name="Hemphill L."/>
            <person name="Bason N."/>
            <person name="Farbrother P."/>
            <person name="Desany B."/>
            <person name="Just E."/>
            <person name="Morio T."/>
            <person name="Rost R."/>
            <person name="Churcher C.M."/>
            <person name="Cooper J."/>
            <person name="Haydock S."/>
            <person name="van Driessche N."/>
            <person name="Cronin A."/>
            <person name="Goodhead I."/>
            <person name="Muzny D.M."/>
            <person name="Mourier T."/>
            <person name="Pain A."/>
            <person name="Lu M."/>
            <person name="Harper D."/>
            <person name="Lindsay R."/>
            <person name="Hauser H."/>
            <person name="James K.D."/>
            <person name="Quiles M."/>
            <person name="Madan Babu M."/>
            <person name="Saito T."/>
            <person name="Buchrieser C."/>
            <person name="Wardroper A."/>
            <person name="Felder M."/>
            <person name="Thangavelu M."/>
            <person name="Johnson D."/>
            <person name="Knights A."/>
            <person name="Loulseged H."/>
            <person name="Mungall K.L."/>
            <person name="Oliver K."/>
            <person name="Price C."/>
            <person name="Quail M.A."/>
            <person name="Urushihara H."/>
            <person name="Hernandez J."/>
            <person name="Rabbinowitsch E."/>
            <person name="Steffen D."/>
            <person name="Sanders M."/>
            <person name="Ma J."/>
            <person name="Kohara Y."/>
            <person name="Sharp S."/>
            <person name="Simmonds M.N."/>
            <person name="Spiegler S."/>
            <person name="Tivey A."/>
            <person name="Sugano S."/>
            <person name="White B."/>
            <person name="Walker D."/>
            <person name="Woodward J.R."/>
            <person name="Winckler T."/>
            <person name="Tanaka Y."/>
            <person name="Shaulsky G."/>
            <person name="Schleicher M."/>
            <person name="Weinstock G.M."/>
            <person name="Rosenthal A."/>
            <person name="Cox E.C."/>
            <person name="Chisholm R.L."/>
            <person name="Gibbs R.A."/>
            <person name="Loomis W.F."/>
            <person name="Platzer M."/>
            <person name="Kay R.R."/>
            <person name="Williams J.G."/>
            <person name="Dear P.H."/>
            <person name="Noegel A.A."/>
            <person name="Barrell B.G."/>
            <person name="Kuspa A."/>
        </authorList>
    </citation>
    <scope>NUCLEOTIDE SEQUENCE [LARGE SCALE GENOMIC DNA]</scope>
    <source>
        <strain>AX4</strain>
    </source>
</reference>
<proteinExistence type="predicted"/>
<name>Y5539_DICDI</name>
<feature type="chain" id="PRO_0000350882" description="Putative uncharacterized protein DDB_G0283469">
    <location>
        <begin position="1"/>
        <end position="147"/>
    </location>
</feature>
<feature type="region of interest" description="Disordered" evidence="1">
    <location>
        <begin position="1"/>
        <end position="49"/>
    </location>
</feature>
<feature type="region of interest" description="Disordered" evidence="1">
    <location>
        <begin position="125"/>
        <end position="147"/>
    </location>
</feature>
<feature type="compositionally biased region" description="Low complexity" evidence="1">
    <location>
        <begin position="8"/>
        <end position="49"/>
    </location>
</feature>
<feature type="compositionally biased region" description="Low complexity" evidence="1">
    <location>
        <begin position="125"/>
        <end position="140"/>
    </location>
</feature>
<keyword id="KW-1185">Reference proteome</keyword>